<accession>Q46EB1</accession>
<keyword id="KW-0489">Methyltransferase</keyword>
<keyword id="KW-0694">RNA-binding</keyword>
<keyword id="KW-0698">rRNA processing</keyword>
<keyword id="KW-0808">Transferase</keyword>
<keyword id="KW-0819">tRNA processing</keyword>
<sequence length="226" mass="25265">MPEVKRLSDGIFEVIKDKKQLATKNLDPGKTVYGEKLIAVEGVEYRTWDPRRSKLGAMVLKKFNIPLTKNSKVLYLGAASGTTVSHVSDIVSEGAVYAVEFAPRSMRDLIGLASRRKNIHPILADAGKPDSYSHLVEPVDLIFQDVAQPNQAEIAARNAVRFLKREGYLLLSIKARSIDTVAKPKEVFKAEVKKLEQAFEPRFEILNAKDLMPYHEDHLGVLAKLK</sequence>
<comment type="function">
    <text evidence="1">Involved in pre-rRNA and tRNA processing. Utilizes the methyl donor S-adenosyl-L-methionine to catalyze the site-specific 2'-hydroxyl methylation of ribose moieties in rRNA and tRNA. Site specificity is provided by a guide RNA that base pairs with the substrate. Methylation occurs at a characteristic distance from the sequence involved in base pairing with the guide RNA.</text>
</comment>
<comment type="subunit">
    <text evidence="1">Interacts with nop5. Component of box C/D small ribonucleoprotein (sRNP) particles that contain rpl7ae, FlpA and nop5, plus a guide RNA.</text>
</comment>
<comment type="similarity">
    <text evidence="1">Belongs to the methyltransferase superfamily. Fibrillarin family.</text>
</comment>
<gene>
    <name evidence="1" type="primary">flpA</name>
    <name type="ordered locus">Mbar_A0804</name>
</gene>
<feature type="chain" id="PRO_1000006938" description="Fibrillarin-like rRNA/tRNA 2'-O-methyltransferase">
    <location>
        <begin position="1"/>
        <end position="226"/>
    </location>
</feature>
<feature type="binding site" evidence="1">
    <location>
        <begin position="82"/>
        <end position="83"/>
    </location>
    <ligand>
        <name>S-adenosyl-L-methionine</name>
        <dbReference type="ChEBI" id="CHEBI:59789"/>
    </ligand>
</feature>
<feature type="binding site" evidence="1">
    <location>
        <begin position="100"/>
        <end position="101"/>
    </location>
    <ligand>
        <name>S-adenosyl-L-methionine</name>
        <dbReference type="ChEBI" id="CHEBI:59789"/>
    </ligand>
</feature>
<feature type="binding site" evidence="1">
    <location>
        <begin position="125"/>
        <end position="126"/>
    </location>
    <ligand>
        <name>S-adenosyl-L-methionine</name>
        <dbReference type="ChEBI" id="CHEBI:59789"/>
    </ligand>
</feature>
<feature type="binding site" evidence="1">
    <location>
        <begin position="145"/>
        <end position="148"/>
    </location>
    <ligand>
        <name>S-adenosyl-L-methionine</name>
        <dbReference type="ChEBI" id="CHEBI:59789"/>
    </ligand>
</feature>
<proteinExistence type="inferred from homology"/>
<dbReference type="EC" id="2.1.1.-" evidence="1"/>
<dbReference type="EMBL" id="CP000099">
    <property type="protein sequence ID" value="AAZ69781.1"/>
    <property type="molecule type" value="Genomic_DNA"/>
</dbReference>
<dbReference type="SMR" id="Q46EB1"/>
<dbReference type="STRING" id="269797.Mbar_A0804"/>
<dbReference type="PaxDb" id="269797-Mbar_A0804"/>
<dbReference type="KEGG" id="mba:Mbar_A0804"/>
<dbReference type="eggNOG" id="arCOG00078">
    <property type="taxonomic scope" value="Archaea"/>
</dbReference>
<dbReference type="HOGENOM" id="CLU_059055_2_0_2"/>
<dbReference type="OrthoDB" id="6244at2157"/>
<dbReference type="GO" id="GO:1990259">
    <property type="term" value="F:histone H2AQ104 methyltransferase activity"/>
    <property type="evidence" value="ECO:0007669"/>
    <property type="project" value="TreeGrafter"/>
</dbReference>
<dbReference type="GO" id="GO:0003723">
    <property type="term" value="F:RNA binding"/>
    <property type="evidence" value="ECO:0007669"/>
    <property type="project" value="UniProtKB-UniRule"/>
</dbReference>
<dbReference type="GO" id="GO:0008649">
    <property type="term" value="F:rRNA methyltransferase activity"/>
    <property type="evidence" value="ECO:0007669"/>
    <property type="project" value="TreeGrafter"/>
</dbReference>
<dbReference type="GO" id="GO:0000494">
    <property type="term" value="P:box C/D sno(s)RNA 3'-end processing"/>
    <property type="evidence" value="ECO:0007669"/>
    <property type="project" value="TreeGrafter"/>
</dbReference>
<dbReference type="GO" id="GO:0008033">
    <property type="term" value="P:tRNA processing"/>
    <property type="evidence" value="ECO:0007669"/>
    <property type="project" value="UniProtKB-UniRule"/>
</dbReference>
<dbReference type="FunFam" id="3.40.50.150:FF:000343">
    <property type="entry name" value="Fibrillarin-like rRNA/tRNA 2'-O-methyltransferase"/>
    <property type="match status" value="1"/>
</dbReference>
<dbReference type="Gene3D" id="3.30.200.20">
    <property type="entry name" value="Phosphorylase Kinase, domain 1"/>
    <property type="match status" value="1"/>
</dbReference>
<dbReference type="Gene3D" id="3.40.50.150">
    <property type="entry name" value="Vaccinia Virus protein VP39"/>
    <property type="match status" value="1"/>
</dbReference>
<dbReference type="HAMAP" id="MF_00351">
    <property type="entry name" value="RNA_methyltransf_FlpA"/>
    <property type="match status" value="1"/>
</dbReference>
<dbReference type="InterPro" id="IPR000692">
    <property type="entry name" value="Fibrillarin"/>
</dbReference>
<dbReference type="InterPro" id="IPR020813">
    <property type="entry name" value="Fibrillarin_CS"/>
</dbReference>
<dbReference type="InterPro" id="IPR029063">
    <property type="entry name" value="SAM-dependent_MTases_sf"/>
</dbReference>
<dbReference type="NCBIfam" id="NF003276">
    <property type="entry name" value="PRK04266.1-2"/>
    <property type="match status" value="1"/>
</dbReference>
<dbReference type="NCBIfam" id="NF003278">
    <property type="entry name" value="PRK04266.1-4"/>
    <property type="match status" value="1"/>
</dbReference>
<dbReference type="PANTHER" id="PTHR10335:SF17">
    <property type="entry name" value="FIBRILLARIN"/>
    <property type="match status" value="1"/>
</dbReference>
<dbReference type="PANTHER" id="PTHR10335">
    <property type="entry name" value="RRNA 2-O-METHYLTRANSFERASE FIBRILLARIN"/>
    <property type="match status" value="1"/>
</dbReference>
<dbReference type="Pfam" id="PF01269">
    <property type="entry name" value="Fibrillarin"/>
    <property type="match status" value="1"/>
</dbReference>
<dbReference type="PIRSF" id="PIRSF006540">
    <property type="entry name" value="Nop17p"/>
    <property type="match status" value="1"/>
</dbReference>
<dbReference type="PRINTS" id="PR00052">
    <property type="entry name" value="FIBRILLARIN"/>
</dbReference>
<dbReference type="SMART" id="SM01206">
    <property type="entry name" value="Fibrillarin"/>
    <property type="match status" value="1"/>
</dbReference>
<dbReference type="SUPFAM" id="SSF53335">
    <property type="entry name" value="S-adenosyl-L-methionine-dependent methyltransferases"/>
    <property type="match status" value="1"/>
</dbReference>
<dbReference type="PROSITE" id="PS00566">
    <property type="entry name" value="FIBRILLARIN"/>
    <property type="match status" value="1"/>
</dbReference>
<protein>
    <recommendedName>
        <fullName evidence="1">Fibrillarin-like rRNA/tRNA 2'-O-methyltransferase</fullName>
        <ecNumber evidence="1">2.1.1.-</ecNumber>
    </recommendedName>
</protein>
<organism>
    <name type="scientific">Methanosarcina barkeri (strain Fusaro / DSM 804)</name>
    <dbReference type="NCBI Taxonomy" id="269797"/>
    <lineage>
        <taxon>Archaea</taxon>
        <taxon>Methanobacteriati</taxon>
        <taxon>Methanobacteriota</taxon>
        <taxon>Stenosarchaea group</taxon>
        <taxon>Methanomicrobia</taxon>
        <taxon>Methanosarcinales</taxon>
        <taxon>Methanosarcinaceae</taxon>
        <taxon>Methanosarcina</taxon>
    </lineage>
</organism>
<name>FLPA_METBF</name>
<evidence type="ECO:0000255" key="1">
    <source>
        <dbReference type="HAMAP-Rule" id="MF_00351"/>
    </source>
</evidence>
<reference key="1">
    <citation type="journal article" date="2006" name="J. Bacteriol.">
        <title>The Methanosarcina barkeri genome: comparative analysis with Methanosarcina acetivorans and Methanosarcina mazei reveals extensive rearrangement within methanosarcinal genomes.</title>
        <authorList>
            <person name="Maeder D.L."/>
            <person name="Anderson I."/>
            <person name="Brettin T.S."/>
            <person name="Bruce D.C."/>
            <person name="Gilna P."/>
            <person name="Han C.S."/>
            <person name="Lapidus A."/>
            <person name="Metcalf W.W."/>
            <person name="Saunders E."/>
            <person name="Tapia R."/>
            <person name="Sowers K.R."/>
        </authorList>
    </citation>
    <scope>NUCLEOTIDE SEQUENCE [LARGE SCALE GENOMIC DNA]</scope>
    <source>
        <strain>Fusaro / DSM 804</strain>
    </source>
</reference>